<sequence>MSISSDEVNFLVYRYLQESGFSHSAFTFGIESHISQSNINGALAPPAALISIIQKGLQYVEAEVSINEDGTLFDGRPIESLSLIDAVMPDVVQTRQQAYRDKLAQQQTAAAAAAAAAAAATPNNQQPPAKNGENTANGEENGGHALANNHTDMMEVDGDVEIPSSKAVVLRGHESEVFICAWNPVSDLLASGSGDSTARIWNLSENSTSGSTQLVLRHCIREGGQDVPSNKDVTSLDWNSEGTLLATGSYDGFARIWTKDGNLASTLGQHKGPIFALKWNKKGNFILSAGVDKTTIIWDAHTGEAKQQFPFHSAPALDVDWQSNNTFASCSTDMCIHVCKLGQDRPIKTFQGHTNEVNAIKWDPTGNLLASCSDDMTLKIWSMKHDTCVHDLQAHNKEIYTIKWSPTGPGTNNPNANLMLASASFDSTVRLWDVDRGICIHTLTKHQEPVYSVAFSPDGRYLASGSFDKCVHIWNTQTGALVHSYRGTGGIFEVCWNAAGDKVGASASDGSVCVLDLRK</sequence>
<accession>Q7SZM9</accession>
<protein>
    <recommendedName>
        <fullName>F-box-like/WD repeat-containing protein TBL1XR1-A</fullName>
    </recommendedName>
    <alternativeName>
        <fullName>Nuclear receptor corepressor/HDAC3 complex subunit TBLR1-A</fullName>
    </alternativeName>
    <alternativeName>
        <fullName>TBL1-related protein 1-A</fullName>
        <shortName>xTBLR1</shortName>
    </alternativeName>
    <alternativeName>
        <fullName>Transducin beta-like 1X-related protein 1-A</fullName>
    </alternativeName>
</protein>
<organism>
    <name type="scientific">Xenopus laevis</name>
    <name type="common">African clawed frog</name>
    <dbReference type="NCBI Taxonomy" id="8355"/>
    <lineage>
        <taxon>Eukaryota</taxon>
        <taxon>Metazoa</taxon>
        <taxon>Chordata</taxon>
        <taxon>Craniata</taxon>
        <taxon>Vertebrata</taxon>
        <taxon>Euteleostomi</taxon>
        <taxon>Amphibia</taxon>
        <taxon>Batrachia</taxon>
        <taxon>Anura</taxon>
        <taxon>Pipoidea</taxon>
        <taxon>Pipidae</taxon>
        <taxon>Xenopodinae</taxon>
        <taxon>Xenopus</taxon>
        <taxon>Xenopus</taxon>
    </lineage>
</organism>
<proteinExistence type="evidence at protein level"/>
<gene>
    <name type="primary">tbl1xr1-a</name>
    <name type="synonym">tblr1</name>
</gene>
<comment type="function">
    <text evidence="1">F-box-like protein which acts as an integral component of the N-CoR transcriptional corepressor complex. Probably regulates transcription activation mediated by nuclear receptors. May mediate the recruitment of the 19S proteasome complex, leading to the subsequent proteasomal degradation of the N-CoR complex, thereby allowing cofactor exchange and transcription activation (By similarity).</text>
</comment>
<comment type="subunit">
    <text evidence="4 5">Interacts with heterodimers of rxra and thrb, and this interaction is abrogated by thyroid hormone binding to thrb. Interacts with ncor1.</text>
</comment>
<comment type="subcellular location">
    <subcellularLocation>
        <location evidence="1">Nucleus</location>
    </subcellularLocation>
</comment>
<comment type="developmental stage">
    <text evidence="5">Expressed in the developing intestine both prior to and during remodeling (stages NF54 to NF66).</text>
</comment>
<comment type="domain">
    <text evidence="1">The F-box-like domain is related to the F-box domain, and also functions to recruit ubiquitin E3 ligase complexes.</text>
</comment>
<comment type="similarity">
    <text evidence="6">Belongs to the WD repeat EBI family.</text>
</comment>
<dbReference type="EMBL" id="AY225088">
    <property type="protein sequence ID" value="AAP20646.1"/>
    <property type="molecule type" value="mRNA"/>
</dbReference>
<dbReference type="RefSeq" id="NP_001082621.1">
    <property type="nucleotide sequence ID" value="NM_001089152.1"/>
</dbReference>
<dbReference type="SMR" id="Q7SZM9"/>
<dbReference type="BioGRID" id="99938">
    <property type="interactions" value="5"/>
</dbReference>
<dbReference type="IntAct" id="Q7SZM9">
    <property type="interactions" value="2"/>
</dbReference>
<dbReference type="GeneID" id="398608"/>
<dbReference type="KEGG" id="xla:398608"/>
<dbReference type="AGR" id="Xenbase:XB-GENE-6255786"/>
<dbReference type="CTD" id="398608"/>
<dbReference type="Xenbase" id="XB-GENE-6255786">
    <property type="gene designation" value="tbl1xr1.L"/>
</dbReference>
<dbReference type="OrthoDB" id="1367865at2759"/>
<dbReference type="Proteomes" id="UP000186698">
    <property type="component" value="Chromosome 5L"/>
</dbReference>
<dbReference type="Bgee" id="398608">
    <property type="expression patterns" value="Expressed in lung and 19 other cell types or tissues"/>
</dbReference>
<dbReference type="GO" id="GO:0000118">
    <property type="term" value="C:histone deacetylase complex"/>
    <property type="evidence" value="ECO:0000318"/>
    <property type="project" value="GO_Central"/>
</dbReference>
<dbReference type="GO" id="GO:0003714">
    <property type="term" value="F:transcription corepressor activity"/>
    <property type="evidence" value="ECO:0000318"/>
    <property type="project" value="GO_Central"/>
</dbReference>
<dbReference type="GO" id="GO:0006325">
    <property type="term" value="P:chromatin organization"/>
    <property type="evidence" value="ECO:0007669"/>
    <property type="project" value="UniProtKB-KW"/>
</dbReference>
<dbReference type="GO" id="GO:0006357">
    <property type="term" value="P:regulation of transcription by RNA polymerase II"/>
    <property type="evidence" value="ECO:0000318"/>
    <property type="project" value="GO_Central"/>
</dbReference>
<dbReference type="CDD" id="cd00200">
    <property type="entry name" value="WD40"/>
    <property type="match status" value="1"/>
</dbReference>
<dbReference type="FunFam" id="1.20.960.30:FF:000001">
    <property type="entry name" value="F-box-like/WD repeat-containing protein TBL1XR1"/>
    <property type="match status" value="1"/>
</dbReference>
<dbReference type="FunFam" id="2.130.10.10:FF:002234">
    <property type="entry name" value="F-box-like/WD repeat-containing protein TBL1XR1"/>
    <property type="match status" value="1"/>
</dbReference>
<dbReference type="Gene3D" id="1.20.960.30">
    <property type="match status" value="1"/>
</dbReference>
<dbReference type="Gene3D" id="2.130.10.10">
    <property type="entry name" value="YVTN repeat-like/Quinoprotein amine dehydrogenase"/>
    <property type="match status" value="1"/>
</dbReference>
<dbReference type="InterPro" id="IPR045183">
    <property type="entry name" value="Ebi-like"/>
</dbReference>
<dbReference type="InterPro" id="IPR020472">
    <property type="entry name" value="G-protein_beta_WD-40_rep"/>
</dbReference>
<dbReference type="InterPro" id="IPR006594">
    <property type="entry name" value="LisH"/>
</dbReference>
<dbReference type="InterPro" id="IPR015943">
    <property type="entry name" value="WD40/YVTN_repeat-like_dom_sf"/>
</dbReference>
<dbReference type="InterPro" id="IPR019775">
    <property type="entry name" value="WD40_repeat_CS"/>
</dbReference>
<dbReference type="InterPro" id="IPR036322">
    <property type="entry name" value="WD40_repeat_dom_sf"/>
</dbReference>
<dbReference type="InterPro" id="IPR001680">
    <property type="entry name" value="WD40_rpt"/>
</dbReference>
<dbReference type="PANTHER" id="PTHR22846:SF40">
    <property type="entry name" value="F-BOX-LIKE_WD REPEAT-CONTAINING PROTEIN TBL1XR1"/>
    <property type="match status" value="1"/>
</dbReference>
<dbReference type="PANTHER" id="PTHR22846">
    <property type="entry name" value="WD40 REPEAT PROTEIN"/>
    <property type="match status" value="1"/>
</dbReference>
<dbReference type="Pfam" id="PF08513">
    <property type="entry name" value="LisH"/>
    <property type="match status" value="1"/>
</dbReference>
<dbReference type="Pfam" id="PF00400">
    <property type="entry name" value="WD40"/>
    <property type="match status" value="6"/>
</dbReference>
<dbReference type="PRINTS" id="PR00320">
    <property type="entry name" value="GPROTEINBRPT"/>
</dbReference>
<dbReference type="SMART" id="SM00667">
    <property type="entry name" value="LisH"/>
    <property type="match status" value="1"/>
</dbReference>
<dbReference type="SMART" id="SM00320">
    <property type="entry name" value="WD40"/>
    <property type="match status" value="8"/>
</dbReference>
<dbReference type="SUPFAM" id="SSF50978">
    <property type="entry name" value="WD40 repeat-like"/>
    <property type="match status" value="2"/>
</dbReference>
<dbReference type="PROSITE" id="PS50896">
    <property type="entry name" value="LISH"/>
    <property type="match status" value="1"/>
</dbReference>
<dbReference type="PROSITE" id="PS00678">
    <property type="entry name" value="WD_REPEATS_1"/>
    <property type="match status" value="4"/>
</dbReference>
<dbReference type="PROSITE" id="PS50082">
    <property type="entry name" value="WD_REPEATS_2"/>
    <property type="match status" value="6"/>
</dbReference>
<dbReference type="PROSITE" id="PS50294">
    <property type="entry name" value="WD_REPEATS_REGION"/>
    <property type="match status" value="1"/>
</dbReference>
<name>TB1RA_XENLA</name>
<evidence type="ECO:0000250" key="1"/>
<evidence type="ECO:0000255" key="2">
    <source>
        <dbReference type="PROSITE-ProRule" id="PRU00126"/>
    </source>
</evidence>
<evidence type="ECO:0000256" key="3">
    <source>
        <dbReference type="SAM" id="MobiDB-lite"/>
    </source>
</evidence>
<evidence type="ECO:0000269" key="4">
    <source>
    </source>
</evidence>
<evidence type="ECO:0000269" key="5">
    <source>
    </source>
</evidence>
<evidence type="ECO:0000305" key="6"/>
<keyword id="KW-0010">Activator</keyword>
<keyword id="KW-0156">Chromatin regulator</keyword>
<keyword id="KW-0539">Nucleus</keyword>
<keyword id="KW-1185">Reference proteome</keyword>
<keyword id="KW-0677">Repeat</keyword>
<keyword id="KW-0678">Repressor</keyword>
<keyword id="KW-0804">Transcription</keyword>
<keyword id="KW-0805">Transcription regulation</keyword>
<keyword id="KW-0833">Ubl conjugation pathway</keyword>
<keyword id="KW-0853">WD repeat</keyword>
<reference key="1">
    <citation type="journal article" date="2003" name="J. Biol. Chem.">
        <title>Fusion protein of retinoic acid receptor-alpha with promyelocytic leukemia protein or promyelocytic leukemia zinc finger protein recruits N-CoR-TBLR1 corepressor complex to repress transcription in vivo.</title>
        <authorList>
            <person name="Tomita A."/>
            <person name="Buchholz D.R."/>
            <person name="Obata K."/>
            <person name="Shi Y.-B."/>
        </authorList>
    </citation>
    <scope>NUCLEOTIDE SEQUENCE [MRNA]</scope>
    <scope>INTERACTION WITH NCOR1; RARA AND RXRA</scope>
</reference>
<reference key="2">
    <citation type="journal article" date="2004" name="Mol. Cell. Biol.">
        <title>Recruitment of N-CoR/SMRT-TBLR1 corepressor complex by unliganded thyroid hormone receptor for gene repression during frog development.</title>
        <authorList>
            <person name="Tomita A."/>
            <person name="Buchholz D.R."/>
            <person name="Shi Y.-B."/>
        </authorList>
    </citation>
    <scope>INTERACTION WITH NCOR1; RXRA AND THRB</scope>
    <scope>DEVELOPMENTAL STAGE</scope>
</reference>
<feature type="chain" id="PRO_0000051268" description="F-box-like/WD repeat-containing protein TBL1XR1-A">
    <location>
        <begin position="1"/>
        <end position="519"/>
    </location>
</feature>
<feature type="domain" description="LisH" evidence="2">
    <location>
        <begin position="4"/>
        <end position="36"/>
    </location>
</feature>
<feature type="domain" description="F-box-like">
    <location>
        <begin position="41"/>
        <end position="86"/>
    </location>
</feature>
<feature type="repeat" description="WD 1">
    <location>
        <begin position="172"/>
        <end position="211"/>
    </location>
</feature>
<feature type="repeat" description="WD 2">
    <location>
        <begin position="228"/>
        <end position="267"/>
    </location>
</feature>
<feature type="repeat" description="WD 3">
    <location>
        <begin position="269"/>
        <end position="308"/>
    </location>
</feature>
<feature type="repeat" description="WD 4">
    <location>
        <begin position="311"/>
        <end position="349"/>
    </location>
</feature>
<feature type="repeat" description="WD 5">
    <location>
        <begin position="352"/>
        <end position="391"/>
    </location>
</feature>
<feature type="repeat" description="WD 6">
    <location>
        <begin position="394"/>
        <end position="442"/>
    </location>
</feature>
<feature type="repeat" description="WD 7">
    <location>
        <begin position="445"/>
        <end position="484"/>
    </location>
</feature>
<feature type="repeat" description="WD 8">
    <location>
        <begin position="486"/>
        <end position="519"/>
    </location>
</feature>
<feature type="region of interest" description="Disordered" evidence="3">
    <location>
        <begin position="115"/>
        <end position="147"/>
    </location>
</feature>
<feature type="compositionally biased region" description="Low complexity" evidence="3">
    <location>
        <begin position="115"/>
        <end position="139"/>
    </location>
</feature>